<sequence>MLTTLLQSDLPGLPLRHCGKVRDVFDIPRKRLPVDTRSGEYLLIVATDRLSAFDVVLPDPIPGKGEILCQISNFWFQKTEHLMPNHLTGINVASVLPDGIDKTLYIQRAVVTKKLKPVGIEAIARGYLIGSGWKDYQRTGKVSGIQLPDGLQEAEKLPDPIFTPSTKAAVGHHDENIDFDTTVKMVGAELAERVRDATLRIYHFAAKYAAECGILLADTKLEFGTDIDGRLYVMDEMLTPDSSRYWPIDEYQVGTSPPSYDKQLVRNYLETLDWDKTAPGPTLPQDIIDRTRAKYTEALQRLAGINID</sequence>
<accession>Q87EX9</accession>
<evidence type="ECO:0000255" key="1">
    <source>
        <dbReference type="HAMAP-Rule" id="MF_00137"/>
    </source>
</evidence>
<name>PUR7_XYLFT</name>
<feature type="chain" id="PRO_0000100904" description="Phosphoribosylaminoimidazole-succinocarboxamide synthase">
    <location>
        <begin position="1"/>
        <end position="308"/>
    </location>
</feature>
<dbReference type="EC" id="6.3.2.6" evidence="1"/>
<dbReference type="EMBL" id="AE009442">
    <property type="protein sequence ID" value="AAO28060.1"/>
    <property type="molecule type" value="Genomic_DNA"/>
</dbReference>
<dbReference type="RefSeq" id="WP_004572982.1">
    <property type="nucleotide sequence ID" value="NC_004556.1"/>
</dbReference>
<dbReference type="SMR" id="Q87EX9"/>
<dbReference type="KEGG" id="xft:PD_0166"/>
<dbReference type="HOGENOM" id="CLU_045637_0_0_6"/>
<dbReference type="UniPathway" id="UPA00074">
    <property type="reaction ID" value="UER00131"/>
</dbReference>
<dbReference type="Proteomes" id="UP000002516">
    <property type="component" value="Chromosome"/>
</dbReference>
<dbReference type="GO" id="GO:0005737">
    <property type="term" value="C:cytoplasm"/>
    <property type="evidence" value="ECO:0007669"/>
    <property type="project" value="TreeGrafter"/>
</dbReference>
<dbReference type="GO" id="GO:0005524">
    <property type="term" value="F:ATP binding"/>
    <property type="evidence" value="ECO:0007669"/>
    <property type="project" value="UniProtKB-KW"/>
</dbReference>
<dbReference type="GO" id="GO:0004639">
    <property type="term" value="F:phosphoribosylaminoimidazolesuccinocarboxamide synthase activity"/>
    <property type="evidence" value="ECO:0007669"/>
    <property type="project" value="UniProtKB-UniRule"/>
</dbReference>
<dbReference type="GO" id="GO:0006189">
    <property type="term" value="P:'de novo' IMP biosynthetic process"/>
    <property type="evidence" value="ECO:0007669"/>
    <property type="project" value="UniProtKB-UniRule"/>
</dbReference>
<dbReference type="CDD" id="cd01414">
    <property type="entry name" value="SAICAR_synt_Sc"/>
    <property type="match status" value="1"/>
</dbReference>
<dbReference type="FunFam" id="3.30.200.20:FF:000365">
    <property type="entry name" value="Phosphoribosylaminoimidazole-succinocarboxamide synthase"/>
    <property type="match status" value="1"/>
</dbReference>
<dbReference type="FunFam" id="3.30.470.20:FF:000015">
    <property type="entry name" value="Phosphoribosylaminoimidazole-succinocarboxamide synthase"/>
    <property type="match status" value="1"/>
</dbReference>
<dbReference type="Gene3D" id="3.30.470.20">
    <property type="entry name" value="ATP-grasp fold, B domain"/>
    <property type="match status" value="1"/>
</dbReference>
<dbReference type="Gene3D" id="3.30.200.20">
    <property type="entry name" value="Phosphorylase Kinase, domain 1"/>
    <property type="match status" value="1"/>
</dbReference>
<dbReference type="HAMAP" id="MF_00137">
    <property type="entry name" value="SAICAR_synth"/>
    <property type="match status" value="1"/>
</dbReference>
<dbReference type="InterPro" id="IPR028923">
    <property type="entry name" value="SAICAR_synt/ADE2_N"/>
</dbReference>
<dbReference type="InterPro" id="IPR001636">
    <property type="entry name" value="SAICAR_synth"/>
</dbReference>
<dbReference type="InterPro" id="IPR018236">
    <property type="entry name" value="SAICAR_synthetase_CS"/>
</dbReference>
<dbReference type="NCBIfam" id="NF010568">
    <property type="entry name" value="PRK13961.1"/>
    <property type="match status" value="1"/>
</dbReference>
<dbReference type="NCBIfam" id="TIGR00081">
    <property type="entry name" value="purC"/>
    <property type="match status" value="1"/>
</dbReference>
<dbReference type="PANTHER" id="PTHR43700">
    <property type="entry name" value="PHOSPHORIBOSYLAMINOIMIDAZOLE-SUCCINOCARBOXAMIDE SYNTHASE"/>
    <property type="match status" value="1"/>
</dbReference>
<dbReference type="PANTHER" id="PTHR43700:SF1">
    <property type="entry name" value="PHOSPHORIBOSYLAMINOIMIDAZOLE-SUCCINOCARBOXAMIDE SYNTHASE"/>
    <property type="match status" value="1"/>
</dbReference>
<dbReference type="Pfam" id="PF01259">
    <property type="entry name" value="SAICAR_synt"/>
    <property type="match status" value="1"/>
</dbReference>
<dbReference type="SUPFAM" id="SSF56104">
    <property type="entry name" value="SAICAR synthase-like"/>
    <property type="match status" value="1"/>
</dbReference>
<dbReference type="PROSITE" id="PS01057">
    <property type="entry name" value="SAICAR_SYNTHETASE_1"/>
    <property type="match status" value="1"/>
</dbReference>
<dbReference type="PROSITE" id="PS01058">
    <property type="entry name" value="SAICAR_SYNTHETASE_2"/>
    <property type="match status" value="1"/>
</dbReference>
<organism>
    <name type="scientific">Xylella fastidiosa (strain Temecula1 / ATCC 700964)</name>
    <dbReference type="NCBI Taxonomy" id="183190"/>
    <lineage>
        <taxon>Bacteria</taxon>
        <taxon>Pseudomonadati</taxon>
        <taxon>Pseudomonadota</taxon>
        <taxon>Gammaproteobacteria</taxon>
        <taxon>Lysobacterales</taxon>
        <taxon>Lysobacteraceae</taxon>
        <taxon>Xylella</taxon>
    </lineage>
</organism>
<gene>
    <name evidence="1" type="primary">purC</name>
    <name type="ordered locus">PD_0166</name>
</gene>
<protein>
    <recommendedName>
        <fullName evidence="1">Phosphoribosylaminoimidazole-succinocarboxamide synthase</fullName>
        <ecNumber evidence="1">6.3.2.6</ecNumber>
    </recommendedName>
    <alternativeName>
        <fullName evidence="1">SAICAR synthetase</fullName>
    </alternativeName>
</protein>
<reference key="1">
    <citation type="journal article" date="2003" name="J. Bacteriol.">
        <title>Comparative analyses of the complete genome sequences of Pierce's disease and citrus variegated chlorosis strains of Xylella fastidiosa.</title>
        <authorList>
            <person name="Van Sluys M.A."/>
            <person name="de Oliveira M.C."/>
            <person name="Monteiro-Vitorello C.B."/>
            <person name="Miyaki C.Y."/>
            <person name="Furlan L.R."/>
            <person name="Camargo L.E.A."/>
            <person name="da Silva A.C.R."/>
            <person name="Moon D.H."/>
            <person name="Takita M.A."/>
            <person name="Lemos E.G.M."/>
            <person name="Machado M.A."/>
            <person name="Ferro M.I.T."/>
            <person name="da Silva F.R."/>
            <person name="Goldman M.H.S."/>
            <person name="Goldman G.H."/>
            <person name="Lemos M.V.F."/>
            <person name="El-Dorry H."/>
            <person name="Tsai S.M."/>
            <person name="Carrer H."/>
            <person name="Carraro D.M."/>
            <person name="de Oliveira R.C."/>
            <person name="Nunes L.R."/>
            <person name="Siqueira W.J."/>
            <person name="Coutinho L.L."/>
            <person name="Kimura E.T."/>
            <person name="Ferro E.S."/>
            <person name="Harakava R."/>
            <person name="Kuramae E.E."/>
            <person name="Marino C.L."/>
            <person name="Giglioti E."/>
            <person name="Abreu I.L."/>
            <person name="Alves L.M.C."/>
            <person name="do Amaral A.M."/>
            <person name="Baia G.S."/>
            <person name="Blanco S.R."/>
            <person name="Brito M.S."/>
            <person name="Cannavan F.S."/>
            <person name="Celestino A.V."/>
            <person name="da Cunha A.F."/>
            <person name="Fenille R.C."/>
            <person name="Ferro J.A."/>
            <person name="Formighieri E.F."/>
            <person name="Kishi L.T."/>
            <person name="Leoni S.G."/>
            <person name="Oliveira A.R."/>
            <person name="Rosa V.E. Jr."/>
            <person name="Sassaki F.T."/>
            <person name="Sena J.A.D."/>
            <person name="de Souza A.A."/>
            <person name="Truffi D."/>
            <person name="Tsukumo F."/>
            <person name="Yanai G.M."/>
            <person name="Zaros L.G."/>
            <person name="Civerolo E.L."/>
            <person name="Simpson A.J.G."/>
            <person name="Almeida N.F. Jr."/>
            <person name="Setubal J.C."/>
            <person name="Kitajima J.P."/>
        </authorList>
    </citation>
    <scope>NUCLEOTIDE SEQUENCE [LARGE SCALE GENOMIC DNA]</scope>
    <source>
        <strain>Temecula1 / ATCC 700964</strain>
    </source>
</reference>
<proteinExistence type="inferred from homology"/>
<comment type="catalytic activity">
    <reaction evidence="1">
        <text>5-amino-1-(5-phospho-D-ribosyl)imidazole-4-carboxylate + L-aspartate + ATP = (2S)-2-[5-amino-1-(5-phospho-beta-D-ribosyl)imidazole-4-carboxamido]succinate + ADP + phosphate + 2 H(+)</text>
        <dbReference type="Rhea" id="RHEA:22628"/>
        <dbReference type="ChEBI" id="CHEBI:15378"/>
        <dbReference type="ChEBI" id="CHEBI:29991"/>
        <dbReference type="ChEBI" id="CHEBI:30616"/>
        <dbReference type="ChEBI" id="CHEBI:43474"/>
        <dbReference type="ChEBI" id="CHEBI:58443"/>
        <dbReference type="ChEBI" id="CHEBI:77657"/>
        <dbReference type="ChEBI" id="CHEBI:456216"/>
        <dbReference type="EC" id="6.3.2.6"/>
    </reaction>
</comment>
<comment type="pathway">
    <text evidence="1">Purine metabolism; IMP biosynthesis via de novo pathway; 5-amino-1-(5-phospho-D-ribosyl)imidazole-4-carboxamide from 5-amino-1-(5-phospho-D-ribosyl)imidazole-4-carboxylate: step 1/2.</text>
</comment>
<comment type="similarity">
    <text evidence="1">Belongs to the SAICAR synthetase family.</text>
</comment>
<keyword id="KW-0067">ATP-binding</keyword>
<keyword id="KW-0436">Ligase</keyword>
<keyword id="KW-0547">Nucleotide-binding</keyword>
<keyword id="KW-0658">Purine biosynthesis</keyword>
<keyword id="KW-1185">Reference proteome</keyword>